<feature type="chain" id="PRO_0000246804" description="7-cyano-7-deazaguanine synthase">
    <location>
        <begin position="1"/>
        <end position="219"/>
    </location>
</feature>
<feature type="binding site" evidence="1">
    <location>
        <begin position="10"/>
        <end position="20"/>
    </location>
    <ligand>
        <name>ATP</name>
        <dbReference type="ChEBI" id="CHEBI:30616"/>
    </ligand>
</feature>
<feature type="binding site" evidence="1">
    <location>
        <position position="188"/>
    </location>
    <ligand>
        <name>Zn(2+)</name>
        <dbReference type="ChEBI" id="CHEBI:29105"/>
    </ligand>
</feature>
<feature type="binding site" evidence="1">
    <location>
        <position position="197"/>
    </location>
    <ligand>
        <name>Zn(2+)</name>
        <dbReference type="ChEBI" id="CHEBI:29105"/>
    </ligand>
</feature>
<feature type="binding site" evidence="1">
    <location>
        <position position="200"/>
    </location>
    <ligand>
        <name>Zn(2+)</name>
        <dbReference type="ChEBI" id="CHEBI:29105"/>
    </ligand>
</feature>
<feature type="binding site" evidence="1">
    <location>
        <position position="203"/>
    </location>
    <ligand>
        <name>Zn(2+)</name>
        <dbReference type="ChEBI" id="CHEBI:29105"/>
    </ligand>
</feature>
<accession>Q5LFI6</accession>
<protein>
    <recommendedName>
        <fullName evidence="1">7-cyano-7-deazaguanine synthase</fullName>
        <ecNumber evidence="1">6.3.4.20</ecNumber>
    </recommendedName>
    <alternativeName>
        <fullName evidence="1">7-cyano-7-carbaguanine synthase</fullName>
    </alternativeName>
    <alternativeName>
        <fullName evidence="1">PreQ(0) synthase</fullName>
    </alternativeName>
    <alternativeName>
        <fullName evidence="1">Queuosine biosynthesis protein QueC</fullName>
    </alternativeName>
</protein>
<comment type="function">
    <text evidence="1">Catalyzes the ATP-dependent conversion of 7-carboxy-7-deazaguanine (CDG) to 7-cyano-7-deazaguanine (preQ(0)).</text>
</comment>
<comment type="catalytic activity">
    <reaction evidence="1">
        <text>7-carboxy-7-deazaguanine + NH4(+) + ATP = 7-cyano-7-deazaguanine + ADP + phosphate + H2O + H(+)</text>
        <dbReference type="Rhea" id="RHEA:27982"/>
        <dbReference type="ChEBI" id="CHEBI:15377"/>
        <dbReference type="ChEBI" id="CHEBI:15378"/>
        <dbReference type="ChEBI" id="CHEBI:28938"/>
        <dbReference type="ChEBI" id="CHEBI:30616"/>
        <dbReference type="ChEBI" id="CHEBI:43474"/>
        <dbReference type="ChEBI" id="CHEBI:45075"/>
        <dbReference type="ChEBI" id="CHEBI:61036"/>
        <dbReference type="ChEBI" id="CHEBI:456216"/>
        <dbReference type="EC" id="6.3.4.20"/>
    </reaction>
</comment>
<comment type="cofactor">
    <cofactor evidence="1">
        <name>Zn(2+)</name>
        <dbReference type="ChEBI" id="CHEBI:29105"/>
    </cofactor>
    <text evidence="1">Binds 1 zinc ion per subunit.</text>
</comment>
<comment type="pathway">
    <text evidence="1">Purine metabolism; 7-cyano-7-deazaguanine biosynthesis.</text>
</comment>
<comment type="similarity">
    <text evidence="1">Belongs to the QueC family.</text>
</comment>
<evidence type="ECO:0000255" key="1">
    <source>
        <dbReference type="HAMAP-Rule" id="MF_01633"/>
    </source>
</evidence>
<sequence>MKNDSAVVLFSGGQDSTTCLFWAKKHFKKVYALSFLYGQKHAHEVELARGIAERAGVEFHVMDTSFIGSLGSNSLTDTSISMDEDKPKDSFPNTFVPGRNLFFLSIAAVFAREQGAFHLVTGVSQTDYSGYPDCRDSFIKSLNVTLNLAMDEQFVIHTPLMWIDKAETWALADELGVFDLVRNETLTCYNGIPADGCGHCPACKLRKQGLEEYLSKRNR</sequence>
<organism>
    <name type="scientific">Bacteroides fragilis (strain ATCC 25285 / DSM 2151 / CCUG 4856 / JCM 11019 / LMG 10263 / NCTC 9343 / Onslow / VPI 2553 / EN-2)</name>
    <dbReference type="NCBI Taxonomy" id="272559"/>
    <lineage>
        <taxon>Bacteria</taxon>
        <taxon>Pseudomonadati</taxon>
        <taxon>Bacteroidota</taxon>
        <taxon>Bacteroidia</taxon>
        <taxon>Bacteroidales</taxon>
        <taxon>Bacteroidaceae</taxon>
        <taxon>Bacteroides</taxon>
    </lineage>
</organism>
<keyword id="KW-0067">ATP-binding</keyword>
<keyword id="KW-0436">Ligase</keyword>
<keyword id="KW-0479">Metal-binding</keyword>
<keyword id="KW-0547">Nucleotide-binding</keyword>
<keyword id="KW-0671">Queuosine biosynthesis</keyword>
<keyword id="KW-0862">Zinc</keyword>
<proteinExistence type="inferred from homology"/>
<name>QUEC_BACFN</name>
<gene>
    <name evidence="1" type="primary">queC</name>
    <name type="ordered locus">BF1396</name>
</gene>
<dbReference type="EC" id="6.3.4.20" evidence="1"/>
<dbReference type="EMBL" id="CR626927">
    <property type="protein sequence ID" value="CAH07108.1"/>
    <property type="molecule type" value="Genomic_DNA"/>
</dbReference>
<dbReference type="SMR" id="Q5LFI6"/>
<dbReference type="PaxDb" id="272559-BF9343_1327"/>
<dbReference type="KEGG" id="bfs:BF9343_1327"/>
<dbReference type="eggNOG" id="COG0603">
    <property type="taxonomic scope" value="Bacteria"/>
</dbReference>
<dbReference type="HOGENOM" id="CLU_081854_0_0_10"/>
<dbReference type="UniPathway" id="UPA00391"/>
<dbReference type="Proteomes" id="UP000006731">
    <property type="component" value="Chromosome"/>
</dbReference>
<dbReference type="GO" id="GO:0005524">
    <property type="term" value="F:ATP binding"/>
    <property type="evidence" value="ECO:0007669"/>
    <property type="project" value="UniProtKB-UniRule"/>
</dbReference>
<dbReference type="GO" id="GO:0016879">
    <property type="term" value="F:ligase activity, forming carbon-nitrogen bonds"/>
    <property type="evidence" value="ECO:0007669"/>
    <property type="project" value="UniProtKB-UniRule"/>
</dbReference>
<dbReference type="GO" id="GO:0008270">
    <property type="term" value="F:zinc ion binding"/>
    <property type="evidence" value="ECO:0007669"/>
    <property type="project" value="UniProtKB-UniRule"/>
</dbReference>
<dbReference type="GO" id="GO:0008616">
    <property type="term" value="P:queuosine biosynthetic process"/>
    <property type="evidence" value="ECO:0007669"/>
    <property type="project" value="UniProtKB-UniRule"/>
</dbReference>
<dbReference type="CDD" id="cd01995">
    <property type="entry name" value="QueC-like"/>
    <property type="match status" value="1"/>
</dbReference>
<dbReference type="FunFam" id="3.40.50.620:FF:000017">
    <property type="entry name" value="7-cyano-7-deazaguanine synthase"/>
    <property type="match status" value="1"/>
</dbReference>
<dbReference type="Gene3D" id="3.40.50.620">
    <property type="entry name" value="HUPs"/>
    <property type="match status" value="1"/>
</dbReference>
<dbReference type="HAMAP" id="MF_01633">
    <property type="entry name" value="QueC"/>
    <property type="match status" value="1"/>
</dbReference>
<dbReference type="InterPro" id="IPR018317">
    <property type="entry name" value="QueC"/>
</dbReference>
<dbReference type="InterPro" id="IPR014729">
    <property type="entry name" value="Rossmann-like_a/b/a_fold"/>
</dbReference>
<dbReference type="NCBIfam" id="TIGR00364">
    <property type="entry name" value="7-cyano-7-deazaguanine synthase QueC"/>
    <property type="match status" value="1"/>
</dbReference>
<dbReference type="PANTHER" id="PTHR42914">
    <property type="entry name" value="7-CYANO-7-DEAZAGUANINE SYNTHASE"/>
    <property type="match status" value="1"/>
</dbReference>
<dbReference type="PANTHER" id="PTHR42914:SF1">
    <property type="entry name" value="7-CYANO-7-DEAZAGUANINE SYNTHASE"/>
    <property type="match status" value="1"/>
</dbReference>
<dbReference type="Pfam" id="PF06508">
    <property type="entry name" value="QueC"/>
    <property type="match status" value="1"/>
</dbReference>
<dbReference type="PIRSF" id="PIRSF006293">
    <property type="entry name" value="ExsB"/>
    <property type="match status" value="1"/>
</dbReference>
<dbReference type="SUPFAM" id="SSF52402">
    <property type="entry name" value="Adenine nucleotide alpha hydrolases-like"/>
    <property type="match status" value="1"/>
</dbReference>
<reference key="1">
    <citation type="journal article" date="2005" name="Science">
        <title>Extensive DNA inversions in the B. fragilis genome control variable gene expression.</title>
        <authorList>
            <person name="Cerdeno-Tarraga A.-M."/>
            <person name="Patrick S."/>
            <person name="Crossman L.C."/>
            <person name="Blakely G."/>
            <person name="Abratt V."/>
            <person name="Lennard N."/>
            <person name="Poxton I."/>
            <person name="Duerden B."/>
            <person name="Harris B."/>
            <person name="Quail M.A."/>
            <person name="Barron A."/>
            <person name="Clark L."/>
            <person name="Corton C."/>
            <person name="Doggett J."/>
            <person name="Holden M.T.G."/>
            <person name="Larke N."/>
            <person name="Line A."/>
            <person name="Lord A."/>
            <person name="Norbertczak H."/>
            <person name="Ormond D."/>
            <person name="Price C."/>
            <person name="Rabbinowitsch E."/>
            <person name="Woodward J."/>
            <person name="Barrell B.G."/>
            <person name="Parkhill J."/>
        </authorList>
    </citation>
    <scope>NUCLEOTIDE SEQUENCE [LARGE SCALE GENOMIC DNA]</scope>
    <source>
        <strain>ATCC 25285 / DSM 2151 / CCUG 4856 / JCM 11019 / LMG 10263 / NCTC 9343 / Onslow / VPI 2553 / EN-2</strain>
    </source>
</reference>